<feature type="chain" id="PRO_0000441417" description="Guanine nucleotide-binding protein G(I)/G(S)/G(O) subunit gamma-14">
    <location>
        <begin position="1"/>
        <end position="107"/>
    </location>
</feature>
<feature type="domain" description="G protein gamma" evidence="1">
    <location>
        <begin position="69"/>
        <end position="107"/>
    </location>
</feature>
<protein>
    <recommendedName>
        <fullName evidence="2">Guanine nucleotide-binding protein G(I)/G(S)/G(O) subunit gamma-14</fullName>
    </recommendedName>
</protein>
<keyword id="KW-1003">Cell membrane</keyword>
<keyword id="KW-0472">Membrane</keyword>
<keyword id="KW-1185">Reference proteome</keyword>
<keyword id="KW-0807">Transducer</keyword>
<gene>
    <name evidence="3" type="primary">GNG14</name>
</gene>
<proteinExistence type="inferred from homology"/>
<organism>
    <name type="scientific">Homo sapiens</name>
    <name type="common">Human</name>
    <dbReference type="NCBI Taxonomy" id="9606"/>
    <lineage>
        <taxon>Eukaryota</taxon>
        <taxon>Metazoa</taxon>
        <taxon>Chordata</taxon>
        <taxon>Craniata</taxon>
        <taxon>Vertebrata</taxon>
        <taxon>Euteleostomi</taxon>
        <taxon>Mammalia</taxon>
        <taxon>Eutheria</taxon>
        <taxon>Euarchontoglires</taxon>
        <taxon>Primates</taxon>
        <taxon>Haplorrhini</taxon>
        <taxon>Catarrhini</taxon>
        <taxon>Hominidae</taxon>
        <taxon>Homo</taxon>
    </lineage>
</organism>
<dbReference type="EMBL" id="AC018761">
    <property type="status" value="NOT_ANNOTATED_CDS"/>
    <property type="molecule type" value="Genomic_DNA"/>
</dbReference>
<dbReference type="EMBL" id="CH471106">
    <property type="protein sequence ID" value="EAW84298.1"/>
    <property type="status" value="ALT_SEQ"/>
    <property type="molecule type" value="Genomic_DNA"/>
</dbReference>
<dbReference type="RefSeq" id="NP_001303621.1">
    <property type="nucleotide sequence ID" value="NM_001316692.2"/>
</dbReference>
<dbReference type="SMR" id="A0A1W2PPG7"/>
<dbReference type="FunCoup" id="A0A1W2PPG7">
    <property type="interactions" value="5"/>
</dbReference>
<dbReference type="BioMuta" id="GNG14"/>
<dbReference type="MassIVE" id="A0A1W2PRI1"/>
<dbReference type="Antibodypedia" id="81930">
    <property type="antibodies" value="1 antibodies from 1 providers"/>
</dbReference>
<dbReference type="DNASU" id="105372280"/>
<dbReference type="Ensembl" id="ENST00000640117.1">
    <property type="protein sequence ID" value="ENSP00000491535.1"/>
    <property type="gene ID" value="ENSG00000283980.1"/>
</dbReference>
<dbReference type="GeneID" id="105372280"/>
<dbReference type="KEGG" id="hsa:105372280"/>
<dbReference type="MANE-Select" id="ENST00000640151.1">
    <property type="protein sequence ID" value="ENSP00000492612.1"/>
    <property type="RefSeq nucleotide sequence ID" value="NM_001316692.2"/>
    <property type="RefSeq protein sequence ID" value="NP_001303621.1"/>
</dbReference>
<dbReference type="AGR" id="HGNC:53439"/>
<dbReference type="CTD" id="105372280"/>
<dbReference type="GeneCards" id="GNG14"/>
<dbReference type="HGNC" id="HGNC:53439">
    <property type="gene designation" value="GNG14"/>
</dbReference>
<dbReference type="HPA" id="ENSG00000283980">
    <property type="expression patterns" value="Not detected"/>
</dbReference>
<dbReference type="neXtProt" id="NX_A0A1W2PPG7"/>
<dbReference type="VEuPathDB" id="HostDB:ENSG00000283980"/>
<dbReference type="GeneTree" id="ENSGT01100000266406"/>
<dbReference type="InParanoid" id="A0A1W2PPG7"/>
<dbReference type="OrthoDB" id="6264244at2759"/>
<dbReference type="PAN-GO" id="A0A1W2PPG7">
    <property type="GO annotations" value="3 GO annotations based on evolutionary models"/>
</dbReference>
<dbReference type="ChiTaRS" id="GNG14">
    <property type="organism name" value="human"/>
</dbReference>
<dbReference type="Pharos" id="A0A1W2PPG7">
    <property type="development level" value="Tdark"/>
</dbReference>
<dbReference type="Proteomes" id="UP000005640">
    <property type="component" value="Chromosome 19"/>
</dbReference>
<dbReference type="RNAct" id="A0A1W2PPG7">
    <property type="molecule type" value="protein"/>
</dbReference>
<dbReference type="Bgee" id="ENSG00000283980">
    <property type="expression patterns" value="Expressed in male germ line stem cell (sensu Vertebrata) in testis and 83 other cell types or tissues"/>
</dbReference>
<dbReference type="ExpressionAtlas" id="A0A1W2PPG7">
    <property type="expression patterns" value="baseline"/>
</dbReference>
<dbReference type="GO" id="GO:0005834">
    <property type="term" value="C:heterotrimeric G-protein complex"/>
    <property type="evidence" value="ECO:0000318"/>
    <property type="project" value="GO_Central"/>
</dbReference>
<dbReference type="GO" id="GO:0031681">
    <property type="term" value="F:G-protein beta-subunit binding"/>
    <property type="evidence" value="ECO:0000318"/>
    <property type="project" value="GO_Central"/>
</dbReference>
<dbReference type="GO" id="GO:0007186">
    <property type="term" value="P:G protein-coupled receptor signaling pathway"/>
    <property type="evidence" value="ECO:0000318"/>
    <property type="project" value="GO_Central"/>
</dbReference>
<dbReference type="CDD" id="cd00068">
    <property type="entry name" value="GGL"/>
    <property type="match status" value="1"/>
</dbReference>
<dbReference type="Gene3D" id="4.10.260.10">
    <property type="entry name" value="Transducin (heterotrimeric G protein), gamma chain"/>
    <property type="match status" value="1"/>
</dbReference>
<dbReference type="InterPro" id="IPR015898">
    <property type="entry name" value="G-protein_gamma-like_dom"/>
</dbReference>
<dbReference type="InterPro" id="IPR036284">
    <property type="entry name" value="GGL_sf"/>
</dbReference>
<dbReference type="InterPro" id="IPR001770">
    <property type="entry name" value="Gprotein-gamma"/>
</dbReference>
<dbReference type="PANTHER" id="PTHR13809">
    <property type="entry name" value="GUANINE NUCLEOTIDE-BINDING PROTEIN GAMMA SUBUNIT"/>
    <property type="match status" value="1"/>
</dbReference>
<dbReference type="Pfam" id="PF00631">
    <property type="entry name" value="G-gamma"/>
    <property type="match status" value="1"/>
</dbReference>
<dbReference type="PRINTS" id="PR00321">
    <property type="entry name" value="GPROTEING"/>
</dbReference>
<dbReference type="SMART" id="SM01224">
    <property type="entry name" value="G_gamma"/>
    <property type="match status" value="1"/>
</dbReference>
<dbReference type="SMART" id="SM00224">
    <property type="entry name" value="GGL"/>
    <property type="match status" value="1"/>
</dbReference>
<dbReference type="SUPFAM" id="SSF48670">
    <property type="entry name" value="Transducin (heterotrimeric G protein), gamma chain"/>
    <property type="match status" value="1"/>
</dbReference>
<dbReference type="PROSITE" id="PS50058">
    <property type="entry name" value="G_PROTEIN_GAMMA"/>
    <property type="match status" value="1"/>
</dbReference>
<name>GBG14_HUMAN</name>
<sequence>MSSKVAINSDIGQALWAVEQLQMEAGIDQVKVRVGASAGGGKRWEHMGQGTGACLGLVWLNQLVCRCPKMAADLLKFCTEQAKNDPFLVGIPAATNSFKEKKPYAIL</sequence>
<reference key="1">
    <citation type="journal article" date="2004" name="Nature">
        <title>The DNA sequence and biology of human chromosome 19.</title>
        <authorList>
            <person name="Grimwood J."/>
            <person name="Gordon L.A."/>
            <person name="Olsen A.S."/>
            <person name="Terry A."/>
            <person name="Schmutz J."/>
            <person name="Lamerdin J.E."/>
            <person name="Hellsten U."/>
            <person name="Goodstein D."/>
            <person name="Couronne O."/>
            <person name="Tran-Gyamfi M."/>
            <person name="Aerts A."/>
            <person name="Altherr M."/>
            <person name="Ashworth L."/>
            <person name="Bajorek E."/>
            <person name="Black S."/>
            <person name="Branscomb E."/>
            <person name="Caenepeel S."/>
            <person name="Carrano A.V."/>
            <person name="Caoile C."/>
            <person name="Chan Y.M."/>
            <person name="Christensen M."/>
            <person name="Cleland C.A."/>
            <person name="Copeland A."/>
            <person name="Dalin E."/>
            <person name="Dehal P."/>
            <person name="Denys M."/>
            <person name="Detter J.C."/>
            <person name="Escobar J."/>
            <person name="Flowers D."/>
            <person name="Fotopulos D."/>
            <person name="Garcia C."/>
            <person name="Georgescu A.M."/>
            <person name="Glavina T."/>
            <person name="Gomez M."/>
            <person name="Gonzales E."/>
            <person name="Groza M."/>
            <person name="Hammon N."/>
            <person name="Hawkins T."/>
            <person name="Haydu L."/>
            <person name="Ho I."/>
            <person name="Huang W."/>
            <person name="Israni S."/>
            <person name="Jett J."/>
            <person name="Kadner K."/>
            <person name="Kimball H."/>
            <person name="Kobayashi A."/>
            <person name="Larionov V."/>
            <person name="Leem S.-H."/>
            <person name="Lopez F."/>
            <person name="Lou Y."/>
            <person name="Lowry S."/>
            <person name="Malfatti S."/>
            <person name="Martinez D."/>
            <person name="McCready P.M."/>
            <person name="Medina C."/>
            <person name="Morgan J."/>
            <person name="Nelson K."/>
            <person name="Nolan M."/>
            <person name="Ovcharenko I."/>
            <person name="Pitluck S."/>
            <person name="Pollard M."/>
            <person name="Popkie A.P."/>
            <person name="Predki P."/>
            <person name="Quan G."/>
            <person name="Ramirez L."/>
            <person name="Rash S."/>
            <person name="Retterer J."/>
            <person name="Rodriguez A."/>
            <person name="Rogers S."/>
            <person name="Salamov A."/>
            <person name="Salazar A."/>
            <person name="She X."/>
            <person name="Smith D."/>
            <person name="Slezak T."/>
            <person name="Solovyev V."/>
            <person name="Thayer N."/>
            <person name="Tice H."/>
            <person name="Tsai M."/>
            <person name="Ustaszewska A."/>
            <person name="Vo N."/>
            <person name="Wagner M."/>
            <person name="Wheeler J."/>
            <person name="Wu K."/>
            <person name="Xie G."/>
            <person name="Yang J."/>
            <person name="Dubchak I."/>
            <person name="Furey T.S."/>
            <person name="DeJong P."/>
            <person name="Dickson M."/>
            <person name="Gordon D."/>
            <person name="Eichler E.E."/>
            <person name="Pennacchio L.A."/>
            <person name="Richardson P."/>
            <person name="Stubbs L."/>
            <person name="Rokhsar D.S."/>
            <person name="Myers R.M."/>
            <person name="Rubin E.M."/>
            <person name="Lucas S.M."/>
        </authorList>
    </citation>
    <scope>NUCLEOTIDE SEQUENCE [LARGE SCALE GENOMIC DNA]</scope>
</reference>
<reference key="2">
    <citation type="submission" date="2005-07" db="EMBL/GenBank/DDBJ databases">
        <authorList>
            <person name="Mural R.J."/>
            <person name="Istrail S."/>
            <person name="Sutton G.G."/>
            <person name="Florea L."/>
            <person name="Halpern A.L."/>
            <person name="Mobarry C.M."/>
            <person name="Lippert R."/>
            <person name="Walenz B."/>
            <person name="Shatkay H."/>
            <person name="Dew I."/>
            <person name="Miller J.R."/>
            <person name="Flanigan M.J."/>
            <person name="Edwards N.J."/>
            <person name="Bolanos R."/>
            <person name="Fasulo D."/>
            <person name="Halldorsson B.V."/>
            <person name="Hannenhalli S."/>
            <person name="Turner R."/>
            <person name="Yooseph S."/>
            <person name="Lu F."/>
            <person name="Nusskern D.R."/>
            <person name="Shue B.C."/>
            <person name="Zheng X.H."/>
            <person name="Zhong F."/>
            <person name="Delcher A.L."/>
            <person name="Huson D.H."/>
            <person name="Kravitz S.A."/>
            <person name="Mouchard L."/>
            <person name="Reinert K."/>
            <person name="Remington K.A."/>
            <person name="Clark A.G."/>
            <person name="Waterman M.S."/>
            <person name="Eichler E.E."/>
            <person name="Adams M.D."/>
            <person name="Hunkapiller M.W."/>
            <person name="Myers E.W."/>
            <person name="Venter J.C."/>
        </authorList>
    </citation>
    <scope>NUCLEOTIDE SEQUENCE [LARGE SCALE GENOMIC DNA]</scope>
</reference>
<accession>A0A1W2PPG7</accession>
<accession>A0A1W2PRI1</accession>
<evidence type="ECO:0000255" key="1">
    <source>
        <dbReference type="PROSITE-ProRule" id="PRU00592"/>
    </source>
</evidence>
<evidence type="ECO:0000305" key="2"/>
<evidence type="ECO:0000312" key="3">
    <source>
        <dbReference type="HGNC" id="HGNC:53439"/>
    </source>
</evidence>
<comment type="function">
    <text evidence="2">Guanine nucleotide-binding proteins (G proteins) are involved as a modulator or transducer in various transmembrane signaling systems. The beta and gamma chains are required for the GTPase activity, for replacement of GDP by GTP, and for G protein-effector interaction.</text>
</comment>
<comment type="subunit">
    <text evidence="2">G proteins are composed of 3 units; alpha, beta and gamma.</text>
</comment>
<comment type="subcellular location">
    <subcellularLocation>
        <location evidence="2">Cell membrane</location>
    </subcellularLocation>
</comment>
<comment type="similarity">
    <text evidence="2">Belongs to the G protein gamma family.</text>
</comment>
<comment type="sequence caution" evidence="2">
    <conflict type="erroneous gene model prediction">
        <sequence resource="EMBL-CDS" id="EAW84298"/>
    </conflict>
</comment>